<organism>
    <name type="scientific">Zea mays</name>
    <name type="common">Maize</name>
    <dbReference type="NCBI Taxonomy" id="4577"/>
    <lineage>
        <taxon>Eukaryota</taxon>
        <taxon>Viridiplantae</taxon>
        <taxon>Streptophyta</taxon>
        <taxon>Embryophyta</taxon>
        <taxon>Tracheophyta</taxon>
        <taxon>Spermatophyta</taxon>
        <taxon>Magnoliopsida</taxon>
        <taxon>Liliopsida</taxon>
        <taxon>Poales</taxon>
        <taxon>Poaceae</taxon>
        <taxon>PACMAD clade</taxon>
        <taxon>Panicoideae</taxon>
        <taxon>Andropogonodae</taxon>
        <taxon>Andropogoneae</taxon>
        <taxon>Tripsacinae</taxon>
        <taxon>Zea</taxon>
    </lineage>
</organism>
<sequence length="213" mass="22312">MSKMAEEKAAAVGGLGGAGAADAAQQQQLAAGEAAAARVRPVETLLRAAPLGLCVAAMTVMLRNQQSNEYGAVAYSDLGGFKYLVYANGLCAAYSLVSAFYTAVPRPATVSRSWLVFLLDQVFTYLILAAGAAAAELLYLAYNGDKEVTWSEACGVFGSFCRQARTSVAITFGTVLCFILLSLISSYRLFSAYEAPPSSALGSKGVEIAAYPR</sequence>
<name>CSPL6_MAIZE</name>
<accession>B4FBQ7</accession>
<proteinExistence type="evidence at transcript level"/>
<feature type="chain" id="PRO_0000370278" description="CASP-like protein 2A1">
    <location>
        <begin position="1"/>
        <end position="213"/>
    </location>
</feature>
<feature type="topological domain" description="Cytoplasmic" evidence="2">
    <location>
        <begin position="1"/>
        <end position="41"/>
    </location>
</feature>
<feature type="transmembrane region" description="Helical" evidence="2">
    <location>
        <begin position="42"/>
        <end position="62"/>
    </location>
</feature>
<feature type="topological domain" description="Extracellular" evidence="2">
    <location>
        <begin position="63"/>
        <end position="83"/>
    </location>
</feature>
<feature type="transmembrane region" description="Helical" evidence="2">
    <location>
        <begin position="84"/>
        <end position="104"/>
    </location>
</feature>
<feature type="topological domain" description="Cytoplasmic" evidence="2">
    <location>
        <begin position="105"/>
        <end position="113"/>
    </location>
</feature>
<feature type="transmembrane region" description="Helical" evidence="2">
    <location>
        <begin position="114"/>
        <end position="134"/>
    </location>
</feature>
<feature type="topological domain" description="Extracellular" evidence="2">
    <location>
        <begin position="135"/>
        <end position="166"/>
    </location>
</feature>
<feature type="transmembrane region" description="Helical" evidence="2">
    <location>
        <begin position="167"/>
        <end position="187"/>
    </location>
</feature>
<feature type="topological domain" description="Cytoplasmic" evidence="2">
    <location>
        <begin position="188"/>
        <end position="213"/>
    </location>
</feature>
<protein>
    <recommendedName>
        <fullName>CASP-like protein 2A1</fullName>
        <shortName>ZmCASPL2A1</shortName>
    </recommendedName>
    <alternativeName>
        <fullName>Salicylic acid-induced protein 1-A</fullName>
    </alternativeName>
</protein>
<reference key="1">
    <citation type="journal article" date="2009" name="Plant Mol. Biol.">
        <title>Insights into corn genes derived from large-scale cDNA sequencing.</title>
        <authorList>
            <person name="Alexandrov N.N."/>
            <person name="Brover V.V."/>
            <person name="Freidin S."/>
            <person name="Troukhan M.E."/>
            <person name="Tatarinova T.V."/>
            <person name="Zhang H."/>
            <person name="Swaller T.J."/>
            <person name="Lu Y.-P."/>
            <person name="Bouck J."/>
            <person name="Flavell R.B."/>
            <person name="Feldmann K.A."/>
        </authorList>
    </citation>
    <scope>NUCLEOTIDE SEQUENCE [LARGE SCALE MRNA]</scope>
</reference>
<reference key="2">
    <citation type="submission" date="2008-07" db="EMBL/GenBank/DDBJ databases">
        <title>Maize full-length cDNA project.</title>
        <authorList>
            <person name="Yu Y."/>
            <person name="Currie J."/>
            <person name="Lomeli R."/>
            <person name="Angelova A."/>
            <person name="Collura K."/>
            <person name="Wissotski M."/>
            <person name="Campos D."/>
            <person name="Kudrna D."/>
            <person name="Golser W."/>
            <person name="Ashely E."/>
            <person name="Haller K."/>
            <person name="Descour A."/>
            <person name="Fernandes J."/>
            <person name="Zuccolo A."/>
            <person name="Soderlund C."/>
            <person name="Walbot V."/>
        </authorList>
    </citation>
    <scope>NUCLEOTIDE SEQUENCE [LARGE SCALE MRNA]</scope>
    <source>
        <strain>cv. B73</strain>
    </source>
</reference>
<reference key="3">
    <citation type="journal article" date="2014" name="Plant Physiol.">
        <title>Functional and evolutionary analysis of the CASPARIAN STRIP MEMBRANE DOMAIN PROTEIN family.</title>
        <authorList>
            <person name="Roppolo D."/>
            <person name="Boeckmann B."/>
            <person name="Pfister A."/>
            <person name="Boutet E."/>
            <person name="Rubio M.C."/>
            <person name="Denervaud-Tendon V."/>
            <person name="Vermeer J.E."/>
            <person name="Gheyselinck J."/>
            <person name="Xenarios I."/>
            <person name="Geldner N."/>
        </authorList>
    </citation>
    <scope>GENE FAMILY</scope>
    <scope>NOMENCLATURE</scope>
</reference>
<comment type="subunit">
    <text evidence="1">Homodimer and heterodimers.</text>
</comment>
<comment type="subcellular location">
    <subcellularLocation>
        <location evidence="1">Cell membrane</location>
        <topology evidence="1">Multi-pass membrane protein</topology>
    </subcellularLocation>
</comment>
<comment type="similarity">
    <text evidence="3">Belongs to the Casparian strip membrane proteins (CASP) family.</text>
</comment>
<keyword id="KW-1003">Cell membrane</keyword>
<keyword id="KW-0472">Membrane</keyword>
<keyword id="KW-1185">Reference proteome</keyword>
<keyword id="KW-0812">Transmembrane</keyword>
<keyword id="KW-1133">Transmembrane helix</keyword>
<evidence type="ECO:0000250" key="1"/>
<evidence type="ECO:0000255" key="2"/>
<evidence type="ECO:0000305" key="3"/>
<dbReference type="EMBL" id="EU970384">
    <property type="protein sequence ID" value="ACG42502.1"/>
    <property type="molecule type" value="mRNA"/>
</dbReference>
<dbReference type="EMBL" id="EU970515">
    <property type="protein sequence ID" value="ACG42633.1"/>
    <property type="molecule type" value="mRNA"/>
</dbReference>
<dbReference type="EMBL" id="EU976137">
    <property type="protein sequence ID" value="ACG48255.1"/>
    <property type="molecule type" value="mRNA"/>
</dbReference>
<dbReference type="EMBL" id="BT034545">
    <property type="protein sequence ID" value="ACF79550.1"/>
    <property type="molecule type" value="mRNA"/>
</dbReference>
<dbReference type="RefSeq" id="NP_001131228.1">
    <property type="nucleotide sequence ID" value="NM_001137756.1"/>
</dbReference>
<dbReference type="FunCoup" id="B4FBQ7">
    <property type="interactions" value="2152"/>
</dbReference>
<dbReference type="STRING" id="4577.B4FBQ7"/>
<dbReference type="PaxDb" id="4577-GRMZM5G806387_P01"/>
<dbReference type="EnsemblPlants" id="Zm00001eb087050_T001">
    <property type="protein sequence ID" value="Zm00001eb087050_P001"/>
    <property type="gene ID" value="Zm00001eb087050"/>
</dbReference>
<dbReference type="GeneID" id="100192537"/>
<dbReference type="Gramene" id="Zm00001eb087050_T001">
    <property type="protein sequence ID" value="Zm00001eb087050_P001"/>
    <property type="gene ID" value="Zm00001eb087050"/>
</dbReference>
<dbReference type="KEGG" id="zma:100192537"/>
<dbReference type="InParanoid" id="B4FBQ7"/>
<dbReference type="OMA" id="TWSQACG"/>
<dbReference type="OrthoDB" id="749363at2759"/>
<dbReference type="Proteomes" id="UP000007305">
    <property type="component" value="Chromosome 2"/>
</dbReference>
<dbReference type="ExpressionAtlas" id="B4FBQ7">
    <property type="expression patterns" value="baseline and differential"/>
</dbReference>
<dbReference type="GO" id="GO:0005886">
    <property type="term" value="C:plasma membrane"/>
    <property type="evidence" value="ECO:0007669"/>
    <property type="project" value="UniProtKB-SubCell"/>
</dbReference>
<dbReference type="InterPro" id="IPR006459">
    <property type="entry name" value="CASP/CASPL"/>
</dbReference>
<dbReference type="InterPro" id="IPR006702">
    <property type="entry name" value="CASP_dom"/>
</dbReference>
<dbReference type="NCBIfam" id="TIGR01569">
    <property type="entry name" value="A_tha_TIGR01569"/>
    <property type="match status" value="1"/>
</dbReference>
<dbReference type="PANTHER" id="PTHR33573:SF46">
    <property type="entry name" value="CASP-LIKE PROTEIN 2A1"/>
    <property type="match status" value="1"/>
</dbReference>
<dbReference type="PANTHER" id="PTHR33573">
    <property type="entry name" value="CASP-LIKE PROTEIN 4A4"/>
    <property type="match status" value="1"/>
</dbReference>
<dbReference type="Pfam" id="PF04535">
    <property type="entry name" value="CASP_dom"/>
    <property type="match status" value="1"/>
</dbReference>